<dbReference type="EMBL" id="CM000160">
    <property type="protein sequence ID" value="EDW97340.1"/>
    <property type="molecule type" value="Genomic_DNA"/>
</dbReference>
<dbReference type="SMR" id="B4PR18"/>
<dbReference type="EnsemblMetazoa" id="FBtr0272844">
    <property type="protein sequence ID" value="FBpp0271336"/>
    <property type="gene ID" value="FBgn0243356"/>
</dbReference>
<dbReference type="EnsemblMetazoa" id="XM_002097592.3">
    <property type="protein sequence ID" value="XP_002097628.1"/>
    <property type="gene ID" value="LOC6537067"/>
</dbReference>
<dbReference type="GeneID" id="6537067"/>
<dbReference type="KEGG" id="dya:Dyak_GE26326"/>
<dbReference type="CTD" id="41973"/>
<dbReference type="eggNOG" id="KOG2054">
    <property type="taxonomic scope" value="Eukaryota"/>
</dbReference>
<dbReference type="HOGENOM" id="CLU_003502_0_1_1"/>
<dbReference type="OMA" id="NPHGGKE"/>
<dbReference type="OrthoDB" id="10251401at2759"/>
<dbReference type="PhylomeDB" id="B4PR18"/>
<dbReference type="Proteomes" id="UP000002282">
    <property type="component" value="Chromosome 3R"/>
</dbReference>
<dbReference type="GO" id="GO:0000794">
    <property type="term" value="C:condensed nuclear chromosome"/>
    <property type="evidence" value="ECO:0000250"/>
    <property type="project" value="UniProtKB"/>
</dbReference>
<dbReference type="GO" id="GO:0032545">
    <property type="term" value="C:CURI complex"/>
    <property type="evidence" value="ECO:0007669"/>
    <property type="project" value="TreeGrafter"/>
</dbReference>
<dbReference type="GO" id="GO:0032040">
    <property type="term" value="C:small-subunit processome"/>
    <property type="evidence" value="ECO:0000250"/>
    <property type="project" value="UniProtKB"/>
</dbReference>
<dbReference type="GO" id="GO:0034456">
    <property type="term" value="C:UTP-C complex"/>
    <property type="evidence" value="ECO:0007669"/>
    <property type="project" value="TreeGrafter"/>
</dbReference>
<dbReference type="GO" id="GO:0003723">
    <property type="term" value="F:RNA binding"/>
    <property type="evidence" value="ECO:0007669"/>
    <property type="project" value="UniProtKB-KW"/>
</dbReference>
<dbReference type="GO" id="GO:0042274">
    <property type="term" value="P:ribosomal small subunit biogenesis"/>
    <property type="evidence" value="ECO:0000250"/>
    <property type="project" value="UniProtKB"/>
</dbReference>
<dbReference type="GO" id="GO:0006364">
    <property type="term" value="P:rRNA processing"/>
    <property type="evidence" value="ECO:0007669"/>
    <property type="project" value="TreeGrafter"/>
</dbReference>
<dbReference type="GO" id="GO:0006409">
    <property type="term" value="P:tRNA export from nucleus"/>
    <property type="evidence" value="ECO:0007669"/>
    <property type="project" value="TreeGrafter"/>
</dbReference>
<dbReference type="FunFam" id="1.10.1410.10:FF:000005">
    <property type="entry name" value="Nucleolar protein 6"/>
    <property type="match status" value="1"/>
</dbReference>
<dbReference type="FunFam" id="1.10.1410.10:FF:000006">
    <property type="entry name" value="Nucleolar protein 6"/>
    <property type="match status" value="1"/>
</dbReference>
<dbReference type="Gene3D" id="1.10.1410.10">
    <property type="match status" value="2"/>
</dbReference>
<dbReference type="InterPro" id="IPR005554">
    <property type="entry name" value="NOL6/Upt22"/>
</dbReference>
<dbReference type="InterPro" id="IPR035082">
    <property type="entry name" value="Nrap_D1"/>
</dbReference>
<dbReference type="InterPro" id="IPR035367">
    <property type="entry name" value="Nrap_D2"/>
</dbReference>
<dbReference type="InterPro" id="IPR035368">
    <property type="entry name" value="Nrap_D3"/>
</dbReference>
<dbReference type="InterPro" id="IPR035369">
    <property type="entry name" value="Nrap_D4"/>
</dbReference>
<dbReference type="InterPro" id="IPR035370">
    <property type="entry name" value="Nrap_D5"/>
</dbReference>
<dbReference type="InterPro" id="IPR035371">
    <property type="entry name" value="Nrap_D6"/>
</dbReference>
<dbReference type="PANTHER" id="PTHR17972:SF0">
    <property type="entry name" value="NUCLEOLAR PROTEIN 6"/>
    <property type="match status" value="1"/>
</dbReference>
<dbReference type="PANTHER" id="PTHR17972">
    <property type="entry name" value="NUCLEOLAR RNA-ASSOCIATED PROTEIN"/>
    <property type="match status" value="1"/>
</dbReference>
<dbReference type="Pfam" id="PF03813">
    <property type="entry name" value="Nrap"/>
    <property type="match status" value="1"/>
</dbReference>
<dbReference type="Pfam" id="PF17403">
    <property type="entry name" value="Nrap_D2"/>
    <property type="match status" value="1"/>
</dbReference>
<dbReference type="Pfam" id="PF17404">
    <property type="entry name" value="Nrap_D3"/>
    <property type="match status" value="1"/>
</dbReference>
<dbReference type="Pfam" id="PF17405">
    <property type="entry name" value="Nrap_D4"/>
    <property type="match status" value="1"/>
</dbReference>
<dbReference type="Pfam" id="PF17406">
    <property type="entry name" value="Nrap_D5"/>
    <property type="match status" value="1"/>
</dbReference>
<dbReference type="Pfam" id="PF17407">
    <property type="entry name" value="Nrap_D6"/>
    <property type="match status" value="1"/>
</dbReference>
<keyword id="KW-0158">Chromosome</keyword>
<keyword id="KW-0539">Nucleus</keyword>
<keyword id="KW-0694">RNA-binding</keyword>
<sequence length="1199" mass="137260">MLRNKRKAGKLVRAPQKAARIDSQANAHAEDHSDLEHSAPSTDDGFDEPKPTIAKKVSLSTAIPKKNKFKQRDDTKNVKPPTLEEMKELRDTQNLFHSNLFKLQVKEMLEELQLKQKYTDFIENWLESFTVFTRQLKDGLMERSHLEIPLKLSQKPTGFVFSKPTREPYLIGAAATGTLLGPKIVVDVALEMPKESLHKEDYLNLRYDQKRALYLTYVTERMKESPAYAQDQFNFNYYANNPLKPVLELTPGTKQVNKHLQVRLFITAPLSSFKPGRFVPWNNNIRPSYYGDEWDEKEPLPSTQHYNANVLFDLTLSENQTHLDKAFKGRRNFQDGLLLLKVWLRQRQLDIGYSGFGAHILSAFIVYLNTQRILHHSSSSYQVARTVWNQLANTDWTKGISLSLVPIQTEELNKFAEQYDVCFIDFTGQHNLCANIPLYLYQRVREEAKLAVELLNDMKLNSFPLIFMQKCPLYSRVDNILKISNYSCINQMLTLHSQPRFKYDFAKYGYPQLLQLLTELLKKGLAERVHSILPLETATPAWPVENKAPVIGNYIQLGLILQPEHAYEVLNKGPAANDDPEGAEEFRRFWGEKSNLRRFQDGSITEAVVWGSAQDSPAKKRLIVRQIVLHLLEHQLQLDSKDVQYIAGELDQVYKLSPWFKVNKLKTKLSLDQDTDAEALSPHAIRSYDELARQLHGLNDLPLEIVSISGVSPVFRYCEPQPVLPQARLVENRILTSSIQRVVIQLGQSGKWPNELSALRALKTAFLIEIGEKLEAQCHLHWMMSADGLLVLKQGYCFLIELAHNKELALLKQEVTERGITTYIDNAASRSLERQHYILPKVSGALHSLHQTYSAFGSTVLLAKRWLATQLLDDGLWPDMATELLVAHLFQQRYAPQPIEAPQTGFIRFLQLLAFSDFNGELFLLNFNNSWQEQQVADLEHNYRSNRQSYPPLAVATSYDMQHAGRLWTSEESPSQRVLGHVTRLARHALEIIETSLLSKDLRFVRPAQLFRASNEGYDLVIQFKPDLVPNSLSYDLGSPFVSFSQPNFNLTRAGSGDVARIVGLLRSAYSDFAAFFYNPHGGKELAIVWRPPTEFAAKPFKVTELQACSPCGNGRVQVIKETLVEDFKLLLKDFYLRIATPEELKREQREHQKPKRYFDAKQTEEKSTPKPKVRKANEKEAPPKKKRLIKSSALKALK</sequence>
<accession>B4PR18</accession>
<feature type="chain" id="PRO_0000383632" description="Nucleolar protein 6">
    <location>
        <begin position="1"/>
        <end position="1199"/>
    </location>
</feature>
<feature type="region of interest" description="Disordered" evidence="5">
    <location>
        <begin position="1"/>
        <end position="51"/>
    </location>
</feature>
<feature type="region of interest" description="Disordered" evidence="5">
    <location>
        <begin position="1146"/>
        <end position="1199"/>
    </location>
</feature>
<feature type="compositionally biased region" description="Basic residues" evidence="5">
    <location>
        <begin position="1"/>
        <end position="10"/>
    </location>
</feature>
<feature type="compositionally biased region" description="Basic and acidic residues" evidence="5">
    <location>
        <begin position="28"/>
        <end position="37"/>
    </location>
</feature>
<feature type="compositionally biased region" description="Basic and acidic residues" evidence="5">
    <location>
        <begin position="1146"/>
        <end position="1169"/>
    </location>
</feature>
<evidence type="ECO:0000250" key="1">
    <source>
        <dbReference type="UniProtKB" id="Q8IH00"/>
    </source>
</evidence>
<evidence type="ECO:0000250" key="2">
    <source>
        <dbReference type="UniProtKB" id="Q8R5K4"/>
    </source>
</evidence>
<evidence type="ECO:0000250" key="3">
    <source>
        <dbReference type="UniProtKB" id="Q9H6R4"/>
    </source>
</evidence>
<evidence type="ECO:0000255" key="4"/>
<evidence type="ECO:0000256" key="5">
    <source>
        <dbReference type="SAM" id="MobiDB-lite"/>
    </source>
</evidence>
<evidence type="ECO:0000312" key="6">
    <source>
        <dbReference type="EMBL" id="EDW97340.1"/>
    </source>
</evidence>
<gene>
    <name evidence="1" type="primary">Mat89Ba</name>
    <name type="ORF">GE26326</name>
</gene>
<comment type="function">
    <text evidence="3">Part of the small subunit (SSU) processome, first precursor of the small eukaryotic ribosomal subunit. During the assembly of the SSU processome in the nucleolus, many ribosome biogenesis factors, an RNA chaperone and ribosomal proteins associate with the nascent pre-rRNA and work in concert to generate RNA folding, modifications, rearrangements and cleavage as well as targeted degradation of pre-ribosomal RNA by the RNA exosome.</text>
</comment>
<comment type="subunit">
    <text evidence="3">Part of the small subunit (SSU) processome, composed of more than 70 proteins and the RNA chaperone small nucleolar RNA (snoRNA) U3.</text>
</comment>
<comment type="subcellular location">
    <subcellularLocation>
        <location evidence="3">Nucleus</location>
        <location evidence="3">Nucleolus</location>
    </subcellularLocation>
    <subcellularLocation>
        <location evidence="2">Chromosome</location>
    </subcellularLocation>
    <text evidence="2">Localizes to condensed chromosomes in mitosis.</text>
</comment>
<comment type="similarity">
    <text evidence="4">Belongs to the NRAP family.</text>
</comment>
<reference evidence="6" key="1">
    <citation type="journal article" date="2007" name="Nature">
        <title>Evolution of genes and genomes on the Drosophila phylogeny.</title>
        <authorList>
            <consortium name="Drosophila 12 genomes consortium"/>
        </authorList>
    </citation>
    <scope>NUCLEOTIDE SEQUENCE [LARGE SCALE GENOMIC DNA]</scope>
    <source>
        <strain evidence="6">Tai18E2 / Tucson 14021-0261.01</strain>
    </source>
</reference>
<organism>
    <name type="scientific">Drosophila yakuba</name>
    <name type="common">Fruit fly</name>
    <dbReference type="NCBI Taxonomy" id="7245"/>
    <lineage>
        <taxon>Eukaryota</taxon>
        <taxon>Metazoa</taxon>
        <taxon>Ecdysozoa</taxon>
        <taxon>Arthropoda</taxon>
        <taxon>Hexapoda</taxon>
        <taxon>Insecta</taxon>
        <taxon>Pterygota</taxon>
        <taxon>Neoptera</taxon>
        <taxon>Endopterygota</taxon>
        <taxon>Diptera</taxon>
        <taxon>Brachycera</taxon>
        <taxon>Muscomorpha</taxon>
        <taxon>Ephydroidea</taxon>
        <taxon>Drosophilidae</taxon>
        <taxon>Drosophila</taxon>
        <taxon>Sophophora</taxon>
    </lineage>
</organism>
<proteinExistence type="inferred from homology"/>
<protein>
    <recommendedName>
        <fullName evidence="3">Nucleolar protein 6</fullName>
    </recommendedName>
    <alternativeName>
        <fullName evidence="1">Maternal transcript 89Ba</fullName>
    </alternativeName>
</protein>
<name>NOL6_DROYA</name>